<sequence length="264" mass="29492">MSGAADREAVFPTRQSLGIMKAKLKGAETGHSLLKRKSEALTKRFREITRRIDEAKRKMGRVMQIASLSLAEVTYAVGGNIGYQIQESAKSARFRIRAKQENVSGVLLPAFEAYQAEGNDDFAMTGLGKGGQQVQRCRETYARAVEALVELASLQTAFVILDEVIKVVNRRVNAIEHVIIPRTENTIKYINSELDELDREEFYRLKKVAAKKQRDNAETDAQMKAKKAEQQRLALADSENAEGEQTENTPADILAAEEDEDVIF</sequence>
<dbReference type="EMBL" id="AF053230">
    <property type="protein sequence ID" value="AAC08354.1"/>
    <property type="status" value="ALT_FRAME"/>
    <property type="molecule type" value="mRNA"/>
</dbReference>
<dbReference type="EMBL" id="BX897675">
    <property type="protein sequence ID" value="CAE85535.1"/>
    <property type="molecule type" value="Genomic_DNA"/>
</dbReference>
<dbReference type="EMBL" id="CM002239">
    <property type="protein sequence ID" value="EAA33469.3"/>
    <property type="molecule type" value="Genomic_DNA"/>
</dbReference>
<dbReference type="RefSeq" id="XP_962705.3">
    <property type="nucleotide sequence ID" value="XM_957612.3"/>
</dbReference>
<dbReference type="SMR" id="O59941"/>
<dbReference type="FunCoup" id="O59941">
    <property type="interactions" value="830"/>
</dbReference>
<dbReference type="STRING" id="367110.O59941"/>
<dbReference type="EnsemblFungi" id="EAA33469">
    <property type="protein sequence ID" value="EAA33469"/>
    <property type="gene ID" value="NCU08035"/>
</dbReference>
<dbReference type="GeneID" id="3878812"/>
<dbReference type="KEGG" id="ncr:NCU08035"/>
<dbReference type="VEuPathDB" id="FungiDB:NCU08035"/>
<dbReference type="HOGENOM" id="CLU_069688_0_1_1"/>
<dbReference type="InParanoid" id="O59941"/>
<dbReference type="OrthoDB" id="7676488at2759"/>
<dbReference type="Proteomes" id="UP000001805">
    <property type="component" value="Chromosome 4, Linkage Group IV"/>
</dbReference>
<dbReference type="GO" id="GO:0000329">
    <property type="term" value="C:fungal-type vacuole membrane"/>
    <property type="evidence" value="ECO:0000318"/>
    <property type="project" value="GO_Central"/>
</dbReference>
<dbReference type="GO" id="GO:0045121">
    <property type="term" value="C:membrane raft"/>
    <property type="evidence" value="ECO:0007669"/>
    <property type="project" value="EnsemblFungi"/>
</dbReference>
<dbReference type="GO" id="GO:0016471">
    <property type="term" value="C:vacuolar proton-transporting V-type ATPase complex"/>
    <property type="evidence" value="ECO:0000314"/>
    <property type="project" value="UniProtKB"/>
</dbReference>
<dbReference type="GO" id="GO:0000221">
    <property type="term" value="C:vacuolar proton-transporting V-type ATPase, V1 domain"/>
    <property type="evidence" value="ECO:0000250"/>
    <property type="project" value="UniProtKB"/>
</dbReference>
<dbReference type="GO" id="GO:0046961">
    <property type="term" value="F:proton-transporting ATPase activity, rotational mechanism"/>
    <property type="evidence" value="ECO:0007669"/>
    <property type="project" value="EnsemblFungi"/>
</dbReference>
<dbReference type="GO" id="GO:0007035">
    <property type="term" value="P:vacuolar acidification"/>
    <property type="evidence" value="ECO:0000314"/>
    <property type="project" value="UniProtKB"/>
</dbReference>
<dbReference type="FunFam" id="1.10.287.3240:FF:000002">
    <property type="entry name" value="Vacuolar atp synthase subunit d"/>
    <property type="match status" value="1"/>
</dbReference>
<dbReference type="Gene3D" id="1.10.287.3240">
    <property type="match status" value="1"/>
</dbReference>
<dbReference type="InterPro" id="IPR002699">
    <property type="entry name" value="V_ATPase_D"/>
</dbReference>
<dbReference type="NCBIfam" id="TIGR00309">
    <property type="entry name" value="V_ATPase_subD"/>
    <property type="match status" value="1"/>
</dbReference>
<dbReference type="PANTHER" id="PTHR11671">
    <property type="entry name" value="V-TYPE ATP SYNTHASE SUBUNIT D"/>
    <property type="match status" value="1"/>
</dbReference>
<dbReference type="Pfam" id="PF01813">
    <property type="entry name" value="ATP-synt_D"/>
    <property type="match status" value="1"/>
</dbReference>
<name>VATD_NEUCR</name>
<reference key="1">
    <citation type="journal article" date="1999" name="J. Bioenerg. Biomembr.">
        <title>The structure of the vacuolar ATPase in Neurospora crassa.</title>
        <authorList>
            <person name="Margolles-Clark E."/>
            <person name="Tenney K."/>
            <person name="Bowman E.J."/>
            <person name="Bowman B.J."/>
        </authorList>
    </citation>
    <scope>NUCLEOTIDE SEQUENCE [MRNA]</scope>
</reference>
<reference key="2">
    <citation type="journal article" date="2003" name="Nucleic Acids Res.">
        <title>What's in the genome of a filamentous fungus? Analysis of the Neurospora genome sequence.</title>
        <authorList>
            <person name="Mannhaupt G."/>
            <person name="Montrone C."/>
            <person name="Haase D."/>
            <person name="Mewes H.-W."/>
            <person name="Aign V."/>
            <person name="Hoheisel J.D."/>
            <person name="Fartmann B."/>
            <person name="Nyakatura G."/>
            <person name="Kempken F."/>
            <person name="Maier J."/>
            <person name="Schulte U."/>
        </authorList>
    </citation>
    <scope>NUCLEOTIDE SEQUENCE [LARGE SCALE GENOMIC DNA]</scope>
    <source>
        <strain>ATCC 24698 / 74-OR23-1A / CBS 708.71 / DSM 1257 / FGSC 987</strain>
    </source>
</reference>
<reference key="3">
    <citation type="journal article" date="2003" name="Nature">
        <title>The genome sequence of the filamentous fungus Neurospora crassa.</title>
        <authorList>
            <person name="Galagan J.E."/>
            <person name="Calvo S.E."/>
            <person name="Borkovich K.A."/>
            <person name="Selker E.U."/>
            <person name="Read N.D."/>
            <person name="Jaffe D.B."/>
            <person name="FitzHugh W."/>
            <person name="Ma L.-J."/>
            <person name="Smirnov S."/>
            <person name="Purcell S."/>
            <person name="Rehman B."/>
            <person name="Elkins T."/>
            <person name="Engels R."/>
            <person name="Wang S."/>
            <person name="Nielsen C.B."/>
            <person name="Butler J."/>
            <person name="Endrizzi M."/>
            <person name="Qui D."/>
            <person name="Ianakiev P."/>
            <person name="Bell-Pedersen D."/>
            <person name="Nelson M.A."/>
            <person name="Werner-Washburne M."/>
            <person name="Selitrennikoff C.P."/>
            <person name="Kinsey J.A."/>
            <person name="Braun E.L."/>
            <person name="Zelter A."/>
            <person name="Schulte U."/>
            <person name="Kothe G.O."/>
            <person name="Jedd G."/>
            <person name="Mewes H.-W."/>
            <person name="Staben C."/>
            <person name="Marcotte E."/>
            <person name="Greenberg D."/>
            <person name="Roy A."/>
            <person name="Foley K."/>
            <person name="Naylor J."/>
            <person name="Stange-Thomann N."/>
            <person name="Barrett R."/>
            <person name="Gnerre S."/>
            <person name="Kamal M."/>
            <person name="Kamvysselis M."/>
            <person name="Mauceli E.W."/>
            <person name="Bielke C."/>
            <person name="Rudd S."/>
            <person name="Frishman D."/>
            <person name="Krystofova S."/>
            <person name="Rasmussen C."/>
            <person name="Metzenberg R.L."/>
            <person name="Perkins D.D."/>
            <person name="Kroken S."/>
            <person name="Cogoni C."/>
            <person name="Macino G."/>
            <person name="Catcheside D.E.A."/>
            <person name="Li W."/>
            <person name="Pratt R.J."/>
            <person name="Osmani S.A."/>
            <person name="DeSouza C.P.C."/>
            <person name="Glass N.L."/>
            <person name="Orbach M.J."/>
            <person name="Berglund J.A."/>
            <person name="Voelker R."/>
            <person name="Yarden O."/>
            <person name="Plamann M."/>
            <person name="Seiler S."/>
            <person name="Dunlap J.C."/>
            <person name="Radford A."/>
            <person name="Aramayo R."/>
            <person name="Natvig D.O."/>
            <person name="Alex L.A."/>
            <person name="Mannhaupt G."/>
            <person name="Ebbole D.J."/>
            <person name="Freitag M."/>
            <person name="Paulsen I."/>
            <person name="Sachs M.S."/>
            <person name="Lander E.S."/>
            <person name="Nusbaum C."/>
            <person name="Birren B.W."/>
        </authorList>
    </citation>
    <scope>NUCLEOTIDE SEQUENCE [LARGE SCALE GENOMIC DNA]</scope>
    <source>
        <strain>ATCC 24698 / 74-OR23-1A / CBS 708.71 / DSM 1257 / FGSC 987</strain>
    </source>
</reference>
<organism>
    <name type="scientific">Neurospora crassa (strain ATCC 24698 / 74-OR23-1A / CBS 708.71 / DSM 1257 / FGSC 987)</name>
    <dbReference type="NCBI Taxonomy" id="367110"/>
    <lineage>
        <taxon>Eukaryota</taxon>
        <taxon>Fungi</taxon>
        <taxon>Dikarya</taxon>
        <taxon>Ascomycota</taxon>
        <taxon>Pezizomycotina</taxon>
        <taxon>Sordariomycetes</taxon>
        <taxon>Sordariomycetidae</taxon>
        <taxon>Sordariales</taxon>
        <taxon>Sordariaceae</taxon>
        <taxon>Neurospora</taxon>
    </lineage>
</organism>
<feature type="chain" id="PRO_0000144242" description="V-type proton ATPase subunit D">
    <location>
        <begin position="1"/>
        <end position="264"/>
    </location>
</feature>
<feature type="region of interest" description="Disordered" evidence="2">
    <location>
        <begin position="214"/>
        <end position="264"/>
    </location>
</feature>
<feature type="compositionally biased region" description="Basic and acidic residues" evidence="2">
    <location>
        <begin position="214"/>
        <end position="230"/>
    </location>
</feature>
<feature type="compositionally biased region" description="Acidic residues" evidence="2">
    <location>
        <begin position="255"/>
        <end position="264"/>
    </location>
</feature>
<proteinExistence type="evidence at transcript level"/>
<evidence type="ECO:0000250" key="1">
    <source>
        <dbReference type="UniProtKB" id="P32610"/>
    </source>
</evidence>
<evidence type="ECO:0000256" key="2">
    <source>
        <dbReference type="SAM" id="MobiDB-lite"/>
    </source>
</evidence>
<evidence type="ECO:0000305" key="3"/>
<accession>O59941</accession>
<accession>Q7SAK6</accession>
<protein>
    <recommendedName>
        <fullName>V-type proton ATPase subunit D</fullName>
        <shortName>V-ATPase subunit D</shortName>
    </recommendedName>
    <alternativeName>
        <fullName>Vacuolar proton pump subunit D</fullName>
    </alternativeName>
</protein>
<gene>
    <name type="primary">vma-8</name>
    <name type="ORF">B2E7.040</name>
    <name type="ORF">NCU08035</name>
</gene>
<keyword id="KW-0375">Hydrogen ion transport</keyword>
<keyword id="KW-0406">Ion transport</keyword>
<keyword id="KW-0472">Membrane</keyword>
<keyword id="KW-1185">Reference proteome</keyword>
<keyword id="KW-0813">Transport</keyword>
<keyword id="KW-0926">Vacuole</keyword>
<comment type="function">
    <text evidence="1">Subunit of the V1 complex of vacuolar(H+)-ATPase (V-ATPase), a multisubunit enzyme composed of a peripheral complex (V1) that hydrolyzes ATP and a membrane integral complex (V0) that translocates protons (By similarity). V-ATPase is responsible for acidifying and maintaining the pH of intracellular compartments (By similarity).</text>
</comment>
<comment type="subunit">
    <text evidence="1">V-ATPase is a heteromultimeric enzyme composed of a peripheral catalytic V1 complex (components A to H) attached to an integral membrane V0 proton pore complex (components: a, c, c', c'', d, e, f and VOA1).</text>
</comment>
<comment type="subcellular location">
    <subcellularLocation>
        <location evidence="1">Vacuole membrane</location>
        <topology evidence="3">Peripheral membrane protein</topology>
        <orientation evidence="3">Cytoplasmic side</orientation>
    </subcellularLocation>
</comment>
<comment type="similarity">
    <text evidence="3">Belongs to the V-ATPase D subunit family.</text>
</comment>
<comment type="sequence caution" evidence="3">
    <conflict type="frameshift">
        <sequence resource="EMBL-CDS" id="AAC08354"/>
    </conflict>
</comment>